<sequence length="339" mass="37199">MHIGTTLSQFIIEETRLYPGASGDFAGLLNDLTTSCKFIGAQVYRGALVGALGSAGTDNVQGEVQKKLDIISNEAILKSMDWTGHLAGMASEEMDDPYPIPRNIPRGKYLLLFDPLDGSSNTDVGISVGTIFSILKAPVAGRDAELADFLQPGVEQVCAGYALYGSSNMLVYSTGYGVNGFTLDPSIGEYILTHNQMRIPEDTSEYAINMSNHRHWQKPVQRYIDELNQGTDGPRQRDFNMRWVGSMVADVHRILCRGGIFLYPFDQRDPKKPGKLRLLYEANPMSYLVEQAGGAASTGTTRILDIVPQGLHQRIPVILGAKNEVERVVAYHQGSFVIP</sequence>
<organism>
    <name type="scientific">Acidithiobacillus ferrooxidans (strain ATCC 53993 / BNL-5-31)</name>
    <name type="common">Leptospirillum ferrooxidans (ATCC 53993)</name>
    <dbReference type="NCBI Taxonomy" id="380394"/>
    <lineage>
        <taxon>Bacteria</taxon>
        <taxon>Pseudomonadati</taxon>
        <taxon>Pseudomonadota</taxon>
        <taxon>Acidithiobacillia</taxon>
        <taxon>Acidithiobacillales</taxon>
        <taxon>Acidithiobacillaceae</taxon>
        <taxon>Acidithiobacillus</taxon>
    </lineage>
</organism>
<gene>
    <name evidence="1" type="primary">fbp</name>
    <name type="ordered locus">Lferr_0368</name>
</gene>
<name>F16PA_ACIF5</name>
<comment type="catalytic activity">
    <reaction evidence="1">
        <text>beta-D-fructose 1,6-bisphosphate + H2O = beta-D-fructose 6-phosphate + phosphate</text>
        <dbReference type="Rhea" id="RHEA:11064"/>
        <dbReference type="ChEBI" id="CHEBI:15377"/>
        <dbReference type="ChEBI" id="CHEBI:32966"/>
        <dbReference type="ChEBI" id="CHEBI:43474"/>
        <dbReference type="ChEBI" id="CHEBI:57634"/>
        <dbReference type="EC" id="3.1.3.11"/>
    </reaction>
</comment>
<comment type="cofactor">
    <cofactor evidence="1">
        <name>Mg(2+)</name>
        <dbReference type="ChEBI" id="CHEBI:18420"/>
    </cofactor>
    <text evidence="1">Binds 2 magnesium ions per subunit.</text>
</comment>
<comment type="pathway">
    <text evidence="1">Carbohydrate biosynthesis; gluconeogenesis.</text>
</comment>
<comment type="subunit">
    <text evidence="1">Homotetramer.</text>
</comment>
<comment type="subcellular location">
    <subcellularLocation>
        <location evidence="1">Cytoplasm</location>
    </subcellularLocation>
</comment>
<comment type="similarity">
    <text evidence="1">Belongs to the FBPase class 1 family.</text>
</comment>
<evidence type="ECO:0000255" key="1">
    <source>
        <dbReference type="HAMAP-Rule" id="MF_01855"/>
    </source>
</evidence>
<proteinExistence type="inferred from homology"/>
<protein>
    <recommendedName>
        <fullName evidence="1">Fructose-1,6-bisphosphatase class 1</fullName>
        <shortName evidence="1">FBPase class 1</shortName>
        <ecNumber evidence="1">3.1.3.11</ecNumber>
    </recommendedName>
    <alternativeName>
        <fullName evidence="1">D-fructose-1,6-bisphosphate 1-phosphohydrolase class 1</fullName>
    </alternativeName>
</protein>
<reference key="1">
    <citation type="submission" date="2008-08" db="EMBL/GenBank/DDBJ databases">
        <title>Complete sequence of Acidithiobacillus ferrooxidans ATCC 53993.</title>
        <authorList>
            <person name="Lucas S."/>
            <person name="Copeland A."/>
            <person name="Lapidus A."/>
            <person name="Glavina del Rio T."/>
            <person name="Dalin E."/>
            <person name="Tice H."/>
            <person name="Bruce D."/>
            <person name="Goodwin L."/>
            <person name="Pitluck S."/>
            <person name="Sims D."/>
            <person name="Brettin T."/>
            <person name="Detter J.C."/>
            <person name="Han C."/>
            <person name="Kuske C.R."/>
            <person name="Larimer F."/>
            <person name="Land M."/>
            <person name="Hauser L."/>
            <person name="Kyrpides N."/>
            <person name="Lykidis A."/>
            <person name="Borole A.P."/>
        </authorList>
    </citation>
    <scope>NUCLEOTIDE SEQUENCE [LARGE SCALE GENOMIC DNA]</scope>
    <source>
        <strain>ATCC 53993 / BNL-5-31</strain>
    </source>
</reference>
<accession>B5ELA6</accession>
<keyword id="KW-0119">Carbohydrate metabolism</keyword>
<keyword id="KW-0963">Cytoplasm</keyword>
<keyword id="KW-0378">Hydrolase</keyword>
<keyword id="KW-0460">Magnesium</keyword>
<keyword id="KW-0479">Metal-binding</keyword>
<feature type="chain" id="PRO_0000364444" description="Fructose-1,6-bisphosphatase class 1">
    <location>
        <begin position="1"/>
        <end position="339"/>
    </location>
</feature>
<feature type="binding site" evidence="1">
    <location>
        <position position="92"/>
    </location>
    <ligand>
        <name>Mg(2+)</name>
        <dbReference type="ChEBI" id="CHEBI:18420"/>
        <label>1</label>
    </ligand>
</feature>
<feature type="binding site" evidence="1">
    <location>
        <position position="114"/>
    </location>
    <ligand>
        <name>Mg(2+)</name>
        <dbReference type="ChEBI" id="CHEBI:18420"/>
        <label>1</label>
    </ligand>
</feature>
<feature type="binding site" evidence="1">
    <location>
        <position position="114"/>
    </location>
    <ligand>
        <name>Mg(2+)</name>
        <dbReference type="ChEBI" id="CHEBI:18420"/>
        <label>2</label>
    </ligand>
</feature>
<feature type="binding site" evidence="1">
    <location>
        <position position="116"/>
    </location>
    <ligand>
        <name>Mg(2+)</name>
        <dbReference type="ChEBI" id="CHEBI:18420"/>
        <label>1</label>
    </ligand>
</feature>
<feature type="binding site" evidence="1">
    <location>
        <begin position="117"/>
        <end position="120"/>
    </location>
    <ligand>
        <name>substrate</name>
    </ligand>
</feature>
<feature type="binding site" evidence="1">
    <location>
        <position position="117"/>
    </location>
    <ligand>
        <name>Mg(2+)</name>
        <dbReference type="ChEBI" id="CHEBI:18420"/>
        <label>2</label>
    </ligand>
</feature>
<feature type="binding site" evidence="1">
    <location>
        <position position="209"/>
    </location>
    <ligand>
        <name>substrate</name>
    </ligand>
</feature>
<feature type="binding site" evidence="1">
    <location>
        <position position="275"/>
    </location>
    <ligand>
        <name>substrate</name>
    </ligand>
</feature>
<feature type="binding site" evidence="1">
    <location>
        <position position="281"/>
    </location>
    <ligand>
        <name>Mg(2+)</name>
        <dbReference type="ChEBI" id="CHEBI:18420"/>
        <label>2</label>
    </ligand>
</feature>
<dbReference type="EC" id="3.1.3.11" evidence="1"/>
<dbReference type="EMBL" id="CP001132">
    <property type="protein sequence ID" value="ACH82622.1"/>
    <property type="molecule type" value="Genomic_DNA"/>
</dbReference>
<dbReference type="RefSeq" id="WP_012536009.1">
    <property type="nucleotide sequence ID" value="NC_011206.1"/>
</dbReference>
<dbReference type="SMR" id="B5ELA6"/>
<dbReference type="KEGG" id="afe:Lferr_0368"/>
<dbReference type="eggNOG" id="COG0158">
    <property type="taxonomic scope" value="Bacteria"/>
</dbReference>
<dbReference type="HOGENOM" id="CLU_039977_0_0_6"/>
<dbReference type="UniPathway" id="UPA00138"/>
<dbReference type="GO" id="GO:0005829">
    <property type="term" value="C:cytosol"/>
    <property type="evidence" value="ECO:0007669"/>
    <property type="project" value="TreeGrafter"/>
</dbReference>
<dbReference type="GO" id="GO:0042132">
    <property type="term" value="F:fructose 1,6-bisphosphate 1-phosphatase activity"/>
    <property type="evidence" value="ECO:0007669"/>
    <property type="project" value="UniProtKB-UniRule"/>
</dbReference>
<dbReference type="GO" id="GO:0000287">
    <property type="term" value="F:magnesium ion binding"/>
    <property type="evidence" value="ECO:0007669"/>
    <property type="project" value="UniProtKB-UniRule"/>
</dbReference>
<dbReference type="GO" id="GO:0030388">
    <property type="term" value="P:fructose 1,6-bisphosphate metabolic process"/>
    <property type="evidence" value="ECO:0007669"/>
    <property type="project" value="TreeGrafter"/>
</dbReference>
<dbReference type="GO" id="GO:0006002">
    <property type="term" value="P:fructose 6-phosphate metabolic process"/>
    <property type="evidence" value="ECO:0007669"/>
    <property type="project" value="TreeGrafter"/>
</dbReference>
<dbReference type="GO" id="GO:0006000">
    <property type="term" value="P:fructose metabolic process"/>
    <property type="evidence" value="ECO:0007669"/>
    <property type="project" value="TreeGrafter"/>
</dbReference>
<dbReference type="GO" id="GO:0006094">
    <property type="term" value="P:gluconeogenesis"/>
    <property type="evidence" value="ECO:0007669"/>
    <property type="project" value="UniProtKB-UniRule"/>
</dbReference>
<dbReference type="GO" id="GO:0005986">
    <property type="term" value="P:sucrose biosynthetic process"/>
    <property type="evidence" value="ECO:0007669"/>
    <property type="project" value="TreeGrafter"/>
</dbReference>
<dbReference type="CDD" id="cd00354">
    <property type="entry name" value="FBPase"/>
    <property type="match status" value="1"/>
</dbReference>
<dbReference type="FunFam" id="3.30.540.10:FF:000002">
    <property type="entry name" value="Fructose-1,6-bisphosphatase class 1"/>
    <property type="match status" value="1"/>
</dbReference>
<dbReference type="FunFam" id="3.40.190.80:FF:000011">
    <property type="entry name" value="Fructose-1,6-bisphosphatase class 1"/>
    <property type="match status" value="1"/>
</dbReference>
<dbReference type="Gene3D" id="3.40.190.80">
    <property type="match status" value="1"/>
</dbReference>
<dbReference type="Gene3D" id="3.30.540.10">
    <property type="entry name" value="Fructose-1,6-Bisphosphatase, subunit A, domain 1"/>
    <property type="match status" value="1"/>
</dbReference>
<dbReference type="HAMAP" id="MF_01855">
    <property type="entry name" value="FBPase_class1"/>
    <property type="match status" value="1"/>
</dbReference>
<dbReference type="InterPro" id="IPR044015">
    <property type="entry name" value="FBPase_C_dom"/>
</dbReference>
<dbReference type="InterPro" id="IPR000146">
    <property type="entry name" value="FBPase_class-1"/>
</dbReference>
<dbReference type="InterPro" id="IPR033391">
    <property type="entry name" value="FBPase_N"/>
</dbReference>
<dbReference type="InterPro" id="IPR028343">
    <property type="entry name" value="FBPtase"/>
</dbReference>
<dbReference type="InterPro" id="IPR020548">
    <property type="entry name" value="Fructose_bisphosphatase_AS"/>
</dbReference>
<dbReference type="NCBIfam" id="NF006778">
    <property type="entry name" value="PRK09293.1-1"/>
    <property type="match status" value="1"/>
</dbReference>
<dbReference type="NCBIfam" id="NF006779">
    <property type="entry name" value="PRK09293.1-3"/>
    <property type="match status" value="1"/>
</dbReference>
<dbReference type="NCBIfam" id="NF006780">
    <property type="entry name" value="PRK09293.1-4"/>
    <property type="match status" value="1"/>
</dbReference>
<dbReference type="PANTHER" id="PTHR11556">
    <property type="entry name" value="FRUCTOSE-1,6-BISPHOSPHATASE-RELATED"/>
    <property type="match status" value="1"/>
</dbReference>
<dbReference type="PANTHER" id="PTHR11556:SF35">
    <property type="entry name" value="SEDOHEPTULOSE-1,7-BISPHOSPHATASE, CHLOROPLASTIC"/>
    <property type="match status" value="1"/>
</dbReference>
<dbReference type="Pfam" id="PF00316">
    <property type="entry name" value="FBPase"/>
    <property type="match status" value="1"/>
</dbReference>
<dbReference type="Pfam" id="PF18913">
    <property type="entry name" value="FBPase_C"/>
    <property type="match status" value="1"/>
</dbReference>
<dbReference type="PIRSF" id="PIRSF500210">
    <property type="entry name" value="FBPtase"/>
    <property type="match status" value="1"/>
</dbReference>
<dbReference type="PIRSF" id="PIRSF000904">
    <property type="entry name" value="FBPtase_SBPase"/>
    <property type="match status" value="1"/>
</dbReference>
<dbReference type="PRINTS" id="PR00115">
    <property type="entry name" value="F16BPHPHTASE"/>
</dbReference>
<dbReference type="SUPFAM" id="SSF56655">
    <property type="entry name" value="Carbohydrate phosphatase"/>
    <property type="match status" value="1"/>
</dbReference>
<dbReference type="PROSITE" id="PS00124">
    <property type="entry name" value="FBPASE"/>
    <property type="match status" value="1"/>
</dbReference>